<protein>
    <recommendedName>
        <fullName>Dedicator of cytokinesis protein 4</fullName>
    </recommendedName>
</protein>
<reference key="1">
    <citation type="journal article" date="2003" name="Cell">
        <title>DOCK4, a GTPase activator, is disrupted during tumorigenesis.</title>
        <authorList>
            <person name="Yajnik V."/>
            <person name="Paulding C."/>
            <person name="Sordella R."/>
            <person name="McClatchey A.I."/>
            <person name="Saito M."/>
            <person name="Wahrer D.C.R."/>
            <person name="Reynolds P."/>
            <person name="Bell D.W."/>
            <person name="Lake R."/>
            <person name="van den Heuvel S."/>
            <person name="Settleman J."/>
            <person name="Haber D.A."/>
        </authorList>
    </citation>
    <scope>NUCLEOTIDE SEQUENCE [MRNA] (ISOFORM 1)</scope>
    <scope>FUNCTION</scope>
    <scope>SUBCELLULAR LOCATION</scope>
    <scope>TISSUE SPECIFICITY</scope>
    <scope>INTERACTION WITH CRK</scope>
    <scope>RAP1 ACTIVATION</scope>
    <scope>VARIANTS ILE-87; GLN-606; THR-1059; LEU-1718; ALA-1733; PRO-1755; MET-1884; ILE-1914; LEU-1917 AND LEU-1926</scope>
</reference>
<reference key="2">
    <citation type="journal article" date="2004" name="Nat. Genet.">
        <title>Complete sequencing and characterization of 21,243 full-length human cDNAs.</title>
        <authorList>
            <person name="Ota T."/>
            <person name="Suzuki Y."/>
            <person name="Nishikawa T."/>
            <person name="Otsuki T."/>
            <person name="Sugiyama T."/>
            <person name="Irie R."/>
            <person name="Wakamatsu A."/>
            <person name="Hayashi K."/>
            <person name="Sato H."/>
            <person name="Nagai K."/>
            <person name="Kimura K."/>
            <person name="Makita H."/>
            <person name="Sekine M."/>
            <person name="Obayashi M."/>
            <person name="Nishi T."/>
            <person name="Shibahara T."/>
            <person name="Tanaka T."/>
            <person name="Ishii S."/>
            <person name="Yamamoto J."/>
            <person name="Saito K."/>
            <person name="Kawai Y."/>
            <person name="Isono Y."/>
            <person name="Nakamura Y."/>
            <person name="Nagahari K."/>
            <person name="Murakami K."/>
            <person name="Yasuda T."/>
            <person name="Iwayanagi T."/>
            <person name="Wagatsuma M."/>
            <person name="Shiratori A."/>
            <person name="Sudo H."/>
            <person name="Hosoiri T."/>
            <person name="Kaku Y."/>
            <person name="Kodaira H."/>
            <person name="Kondo H."/>
            <person name="Sugawara M."/>
            <person name="Takahashi M."/>
            <person name="Kanda K."/>
            <person name="Yokoi T."/>
            <person name="Furuya T."/>
            <person name="Kikkawa E."/>
            <person name="Omura Y."/>
            <person name="Abe K."/>
            <person name="Kamihara K."/>
            <person name="Katsuta N."/>
            <person name="Sato K."/>
            <person name="Tanikawa M."/>
            <person name="Yamazaki M."/>
            <person name="Ninomiya K."/>
            <person name="Ishibashi T."/>
            <person name="Yamashita H."/>
            <person name="Murakawa K."/>
            <person name="Fujimori K."/>
            <person name="Tanai H."/>
            <person name="Kimata M."/>
            <person name="Watanabe M."/>
            <person name="Hiraoka S."/>
            <person name="Chiba Y."/>
            <person name="Ishida S."/>
            <person name="Ono Y."/>
            <person name="Takiguchi S."/>
            <person name="Watanabe S."/>
            <person name="Yosida M."/>
            <person name="Hotuta T."/>
            <person name="Kusano J."/>
            <person name="Kanehori K."/>
            <person name="Takahashi-Fujii A."/>
            <person name="Hara H."/>
            <person name="Tanase T.-O."/>
            <person name="Nomura Y."/>
            <person name="Togiya S."/>
            <person name="Komai F."/>
            <person name="Hara R."/>
            <person name="Takeuchi K."/>
            <person name="Arita M."/>
            <person name="Imose N."/>
            <person name="Musashino K."/>
            <person name="Yuuki H."/>
            <person name="Oshima A."/>
            <person name="Sasaki N."/>
            <person name="Aotsuka S."/>
            <person name="Yoshikawa Y."/>
            <person name="Matsunawa H."/>
            <person name="Ichihara T."/>
            <person name="Shiohata N."/>
            <person name="Sano S."/>
            <person name="Moriya S."/>
            <person name="Momiyama H."/>
            <person name="Satoh N."/>
            <person name="Takami S."/>
            <person name="Terashima Y."/>
            <person name="Suzuki O."/>
            <person name="Nakagawa S."/>
            <person name="Senoh A."/>
            <person name="Mizoguchi H."/>
            <person name="Goto Y."/>
            <person name="Shimizu F."/>
            <person name="Wakebe H."/>
            <person name="Hishigaki H."/>
            <person name="Watanabe T."/>
            <person name="Sugiyama A."/>
            <person name="Takemoto M."/>
            <person name="Kawakami B."/>
            <person name="Yamazaki M."/>
            <person name="Watanabe K."/>
            <person name="Kumagai A."/>
            <person name="Itakura S."/>
            <person name="Fukuzumi Y."/>
            <person name="Fujimori Y."/>
            <person name="Komiyama M."/>
            <person name="Tashiro H."/>
            <person name="Tanigami A."/>
            <person name="Fujiwara T."/>
            <person name="Ono T."/>
            <person name="Yamada K."/>
            <person name="Fujii Y."/>
            <person name="Ozaki K."/>
            <person name="Hirao M."/>
            <person name="Ohmori Y."/>
            <person name="Kawabata A."/>
            <person name="Hikiji T."/>
            <person name="Kobatake N."/>
            <person name="Inagaki H."/>
            <person name="Ikema Y."/>
            <person name="Okamoto S."/>
            <person name="Okitani R."/>
            <person name="Kawakami T."/>
            <person name="Noguchi S."/>
            <person name="Itoh T."/>
            <person name="Shigeta K."/>
            <person name="Senba T."/>
            <person name="Matsumura K."/>
            <person name="Nakajima Y."/>
            <person name="Mizuno T."/>
            <person name="Morinaga M."/>
            <person name="Sasaki M."/>
            <person name="Togashi T."/>
            <person name="Oyama M."/>
            <person name="Hata H."/>
            <person name="Watanabe M."/>
            <person name="Komatsu T."/>
            <person name="Mizushima-Sugano J."/>
            <person name="Satoh T."/>
            <person name="Shirai Y."/>
            <person name="Takahashi Y."/>
            <person name="Nakagawa K."/>
            <person name="Okumura K."/>
            <person name="Nagase T."/>
            <person name="Nomura N."/>
            <person name="Kikuchi H."/>
            <person name="Masuho Y."/>
            <person name="Yamashita R."/>
            <person name="Nakai K."/>
            <person name="Yada T."/>
            <person name="Nakamura Y."/>
            <person name="Ohara O."/>
            <person name="Isogai T."/>
            <person name="Sugano S."/>
        </authorList>
    </citation>
    <scope>NUCLEOTIDE SEQUENCE [LARGE SCALE MRNA] (ISOFORM 4)</scope>
    <scope>NUCLEOTIDE SEQUENCE [LARGE SCALE MRNA] OF 645-1426 (ISOFORM 3)</scope>
    <source>
        <tissue>Fetal brain</tissue>
        <tissue>Kidney</tissue>
    </source>
</reference>
<reference key="3">
    <citation type="journal article" date="2003" name="Nature">
        <title>The DNA sequence of human chromosome 7.</title>
        <authorList>
            <person name="Hillier L.W."/>
            <person name="Fulton R.S."/>
            <person name="Fulton L.A."/>
            <person name="Graves T.A."/>
            <person name="Pepin K.H."/>
            <person name="Wagner-McPherson C."/>
            <person name="Layman D."/>
            <person name="Maas J."/>
            <person name="Jaeger S."/>
            <person name="Walker R."/>
            <person name="Wylie K."/>
            <person name="Sekhon M."/>
            <person name="Becker M.C."/>
            <person name="O'Laughlin M.D."/>
            <person name="Schaller M.E."/>
            <person name="Fewell G.A."/>
            <person name="Delehaunty K.D."/>
            <person name="Miner T.L."/>
            <person name="Nash W.E."/>
            <person name="Cordes M."/>
            <person name="Du H."/>
            <person name="Sun H."/>
            <person name="Edwards J."/>
            <person name="Bradshaw-Cordum H."/>
            <person name="Ali J."/>
            <person name="Andrews S."/>
            <person name="Isak A."/>
            <person name="Vanbrunt A."/>
            <person name="Nguyen C."/>
            <person name="Du F."/>
            <person name="Lamar B."/>
            <person name="Courtney L."/>
            <person name="Kalicki J."/>
            <person name="Ozersky P."/>
            <person name="Bielicki L."/>
            <person name="Scott K."/>
            <person name="Holmes A."/>
            <person name="Harkins R."/>
            <person name="Harris A."/>
            <person name="Strong C.M."/>
            <person name="Hou S."/>
            <person name="Tomlinson C."/>
            <person name="Dauphin-Kohlberg S."/>
            <person name="Kozlowicz-Reilly A."/>
            <person name="Leonard S."/>
            <person name="Rohlfing T."/>
            <person name="Rock S.M."/>
            <person name="Tin-Wollam A.-M."/>
            <person name="Abbott A."/>
            <person name="Minx P."/>
            <person name="Maupin R."/>
            <person name="Strowmatt C."/>
            <person name="Latreille P."/>
            <person name="Miller N."/>
            <person name="Johnson D."/>
            <person name="Murray J."/>
            <person name="Woessner J.P."/>
            <person name="Wendl M.C."/>
            <person name="Yang S.-P."/>
            <person name="Schultz B.R."/>
            <person name="Wallis J.W."/>
            <person name="Spieth J."/>
            <person name="Bieri T.A."/>
            <person name="Nelson J.O."/>
            <person name="Berkowicz N."/>
            <person name="Wohldmann P.E."/>
            <person name="Cook L.L."/>
            <person name="Hickenbotham M.T."/>
            <person name="Eldred J."/>
            <person name="Williams D."/>
            <person name="Bedell J.A."/>
            <person name="Mardis E.R."/>
            <person name="Clifton S.W."/>
            <person name="Chissoe S.L."/>
            <person name="Marra M.A."/>
            <person name="Raymond C."/>
            <person name="Haugen E."/>
            <person name="Gillett W."/>
            <person name="Zhou Y."/>
            <person name="James R."/>
            <person name="Phelps K."/>
            <person name="Iadanoto S."/>
            <person name="Bubb K."/>
            <person name="Simms E."/>
            <person name="Levy R."/>
            <person name="Clendenning J."/>
            <person name="Kaul R."/>
            <person name="Kent W.J."/>
            <person name="Furey T.S."/>
            <person name="Baertsch R.A."/>
            <person name="Brent M.R."/>
            <person name="Keibler E."/>
            <person name="Flicek P."/>
            <person name="Bork P."/>
            <person name="Suyama M."/>
            <person name="Bailey J.A."/>
            <person name="Portnoy M.E."/>
            <person name="Torrents D."/>
            <person name="Chinwalla A.T."/>
            <person name="Gish W.R."/>
            <person name="Eddy S.R."/>
            <person name="McPherson J.D."/>
            <person name="Olson M.V."/>
            <person name="Eichler E.E."/>
            <person name="Green E.D."/>
            <person name="Waterston R.H."/>
            <person name="Wilson R.K."/>
        </authorList>
    </citation>
    <scope>NUCLEOTIDE SEQUENCE [LARGE SCALE GENOMIC DNA]</scope>
</reference>
<reference key="4">
    <citation type="journal article" date="1998" name="DNA Res.">
        <title>Prediction of the coding sequences of unidentified human genes. XI. The complete sequences of 100 new cDNA clones from brain which code for large proteins in vitro.</title>
        <authorList>
            <person name="Nagase T."/>
            <person name="Ishikawa K."/>
            <person name="Suyama M."/>
            <person name="Kikuno R."/>
            <person name="Miyajima N."/>
            <person name="Tanaka A."/>
            <person name="Kotani H."/>
            <person name="Nomura N."/>
            <person name="Ohara O."/>
        </authorList>
    </citation>
    <scope>NUCLEOTIDE SEQUENCE [LARGE SCALE MRNA] OF 550-1966 (ISOFORM 2)</scope>
    <source>
        <tissue>Brain</tissue>
    </source>
</reference>
<reference key="5">
    <citation type="submission" date="2005-08" db="EMBL/GenBank/DDBJ databases">
        <authorList>
            <person name="Ohara O."/>
            <person name="Nagase T."/>
            <person name="Kikuno R."/>
            <person name="Ishikawa K."/>
            <person name="Suyama M."/>
        </authorList>
    </citation>
    <scope>SEQUENCE REVISION</scope>
</reference>
<reference key="6">
    <citation type="journal article" date="2002" name="J. Cell Sci.">
        <title>Identification of an evolutionarily conserved superfamily of DOCK180-related proteins with guanine nucleotide exchange activity.</title>
        <authorList>
            <person name="Cote J.-F."/>
            <person name="Vuori K."/>
        </authorList>
    </citation>
    <scope>NOMENCLATURE</scope>
</reference>
<reference key="7">
    <citation type="journal article" date="2006" name="J. Mol. Biol.">
        <title>An isoform of GTPase regulator DOCK4 localizes to the stereocilia in the inner ear and binds to harmonin (USH1C).</title>
        <authorList>
            <person name="Yan D."/>
            <person name="Li F."/>
            <person name="Hall M.L."/>
            <person name="Sage C."/>
            <person name="Hu W.H."/>
            <person name="Giallourakis C."/>
            <person name="Upadhyay G."/>
            <person name="Ouyang X.M."/>
            <person name="Du L.L."/>
            <person name="Bethea J.R."/>
            <person name="Chen Z.Y."/>
            <person name="Yajnik V."/>
            <person name="Liu X.Z."/>
        </authorList>
    </citation>
    <scope>FUNCTION (ISOFORM 2)</scope>
    <scope>INTERACTION WITH RAC1 AND USH1C</scope>
    <scope>DOMAIN</scope>
    <scope>ALTERNATIVE SPLICING</scope>
    <scope>TISSUE SPECIFICITY (ISOFORM 2)</scope>
</reference>
<reference key="8">
    <citation type="journal article" date="2008" name="Proc. Natl. Acad. Sci. U.S.A.">
        <title>A quantitative atlas of mitotic phosphorylation.</title>
        <authorList>
            <person name="Dephoure N."/>
            <person name="Zhou C."/>
            <person name="Villen J."/>
            <person name="Beausoleil S.A."/>
            <person name="Bakalarski C.E."/>
            <person name="Elledge S.J."/>
            <person name="Gygi S.P."/>
        </authorList>
    </citation>
    <scope>PHOSPHORYLATION [LARGE SCALE ANALYSIS] AT SER-1614 AND SER-1618</scope>
    <scope>IDENTIFICATION BY MASS SPECTROMETRY [LARGE SCALE ANALYSIS]</scope>
    <source>
        <tissue>Cervix carcinoma</tissue>
    </source>
</reference>
<reference key="9">
    <citation type="journal article" date="2009" name="BMC Immunol.">
        <title>Identification of SH3 domain interaction partners of human FasL (CD178) by phage display screening.</title>
        <authorList>
            <person name="Voss M."/>
            <person name="Lettau M."/>
            <person name="Janssen O."/>
        </authorList>
    </citation>
    <scope>INTERACTION WITH FASLG</scope>
</reference>
<reference key="10">
    <citation type="journal article" date="2009" name="Sci. Signal.">
        <title>Quantitative phosphoproteomic analysis of T cell receptor signaling reveals system-wide modulation of protein-protein interactions.</title>
        <authorList>
            <person name="Mayya V."/>
            <person name="Lundgren D.H."/>
            <person name="Hwang S.-I."/>
            <person name="Rezaul K."/>
            <person name="Wu L."/>
            <person name="Eng J.K."/>
            <person name="Rodionov V."/>
            <person name="Han D.K."/>
        </authorList>
    </citation>
    <scope>PHOSPHORYLATION [LARGE SCALE ANALYSIS] AT SER-1614; SER-1618 AND SER-1620</scope>
    <scope>IDENTIFICATION BY MASS SPECTROMETRY [LARGE SCALE ANALYSIS]</scope>
    <source>
        <tissue>Leukemic T-cell</tissue>
    </source>
</reference>
<reference key="11">
    <citation type="journal article" date="2010" name="J. Cell Biol.">
        <title>Ephexin4 and EphA2 mediate cell migration through a RhoG-dependent mechanism.</title>
        <authorList>
            <person name="Hiramoto-Yamaki N."/>
            <person name="Takeuchi S."/>
            <person name="Ueda S."/>
            <person name="Harada K."/>
            <person name="Fujimoto S."/>
            <person name="Negishi M."/>
            <person name="Katoh H."/>
        </authorList>
    </citation>
    <scope>FUNCTION</scope>
    <scope>INTERACTION WITH ELMO2 AND EPHA2</scope>
    <scope>SUBCELLULAR LOCATION</scope>
</reference>
<reference key="12">
    <citation type="journal article" date="2014" name="J. Proteomics">
        <title>An enzyme assisted RP-RPLC approach for in-depth analysis of human liver phosphoproteome.</title>
        <authorList>
            <person name="Bian Y."/>
            <person name="Song C."/>
            <person name="Cheng K."/>
            <person name="Dong M."/>
            <person name="Wang F."/>
            <person name="Huang J."/>
            <person name="Sun D."/>
            <person name="Wang L."/>
            <person name="Ye M."/>
            <person name="Zou H."/>
        </authorList>
    </citation>
    <scope>IDENTIFICATION BY MASS SPECTROMETRY [LARGE SCALE ANALYSIS]</scope>
    <source>
        <tissue>Liver</tissue>
    </source>
</reference>
<name>DOCK4_HUMAN</name>
<feature type="chain" id="PRO_0000189990" description="Dedicator of cytokinesis protein 4">
    <location>
        <begin position="1"/>
        <end position="1966"/>
    </location>
</feature>
<feature type="domain" description="SH3" evidence="3">
    <location>
        <begin position="6"/>
        <end position="67"/>
    </location>
</feature>
<feature type="domain" description="C2 DOCK-type" evidence="4">
    <location>
        <begin position="401"/>
        <end position="574"/>
    </location>
</feature>
<feature type="domain" description="DOCKER" evidence="5">
    <location>
        <begin position="1190"/>
        <end position="1596"/>
    </location>
</feature>
<feature type="region of interest" description="Disordered" evidence="6">
    <location>
        <begin position="1648"/>
        <end position="1729"/>
    </location>
</feature>
<feature type="region of interest" description="Disordered" evidence="6">
    <location>
        <begin position="1742"/>
        <end position="1966"/>
    </location>
</feature>
<feature type="short sequence motif" description="SH3-binding" evidence="2">
    <location>
        <begin position="1788"/>
        <end position="1794"/>
    </location>
</feature>
<feature type="compositionally biased region" description="Low complexity" evidence="6">
    <location>
        <begin position="1672"/>
        <end position="1703"/>
    </location>
</feature>
<feature type="compositionally biased region" description="Polar residues" evidence="6">
    <location>
        <begin position="1795"/>
        <end position="1809"/>
    </location>
</feature>
<feature type="compositionally biased region" description="Low complexity" evidence="6">
    <location>
        <begin position="1838"/>
        <end position="1863"/>
    </location>
</feature>
<feature type="compositionally biased region" description="Polar residues" evidence="6">
    <location>
        <begin position="1864"/>
        <end position="1873"/>
    </location>
</feature>
<feature type="compositionally biased region" description="Basic and acidic residues" evidence="6">
    <location>
        <begin position="1941"/>
        <end position="1954"/>
    </location>
</feature>
<feature type="modified residue" description="Phosphotyrosine" evidence="1">
    <location>
        <position position="167"/>
    </location>
</feature>
<feature type="modified residue" description="Phosphothreonine" evidence="1">
    <location>
        <position position="193"/>
    </location>
</feature>
<feature type="modified residue" description="Phosphoserine" evidence="1">
    <location>
        <position position="1599"/>
    </location>
</feature>
<feature type="modified residue" description="Phosphoserine" evidence="1">
    <location>
        <position position="1607"/>
    </location>
</feature>
<feature type="modified residue" description="Phosphoserine" evidence="16 17">
    <location>
        <position position="1614"/>
    </location>
</feature>
<feature type="modified residue" description="Phosphoserine" evidence="16 17">
    <location>
        <position position="1618"/>
    </location>
</feature>
<feature type="modified residue" description="Phosphoserine" evidence="17">
    <location>
        <position position="1620"/>
    </location>
</feature>
<feature type="modified residue" description="Phosphoserine" evidence="1">
    <location>
        <position position="1631"/>
    </location>
</feature>
<feature type="modified residue" description="Phosphoserine" evidence="1">
    <location>
        <position position="1769"/>
    </location>
</feature>
<feature type="splice variant" id="VSP_007701" description="In isoform 4." evidence="11">
    <location>
        <begin position="1"/>
        <end position="1687"/>
    </location>
</feature>
<feature type="splice variant" id="VSP_007703" description="In isoform 2 and isoform 3." evidence="11 13">
    <original>I</original>
    <variation>IIPLFGPYPS</variation>
    <location>
        <position position="1134"/>
    </location>
</feature>
<feature type="splice variant" id="VSP_007705" description="In isoform 4." evidence="11">
    <original>NVTSSAPSSAR</original>
    <variation>MLMILSLLLFP</variation>
    <location>
        <begin position="1688"/>
        <end position="1698"/>
    </location>
</feature>
<feature type="splice variant" id="VSP_007706" description="In isoform 2." evidence="13">
    <location>
        <begin position="1760"/>
        <end position="1797"/>
    </location>
</feature>
<feature type="sequence variant" id="VAR_015823" description="Found in a CNS cancer cell line; dbSNP:rs1396518456." evidence="7">
    <original>T</original>
    <variation>I</variation>
    <location>
        <position position="87"/>
    </location>
</feature>
<feature type="sequence variant" id="VAR_057517" description="In dbSNP:rs12705801.">
    <original>N</original>
    <variation>D</variation>
    <location>
        <position position="535"/>
    </location>
</feature>
<feature type="sequence variant" id="VAR_015824" evidence="7">
    <original>E</original>
    <variation>Q</variation>
    <location>
        <position position="606"/>
    </location>
</feature>
<feature type="sequence variant" id="VAR_057518" description="In dbSNP:rs2074130.">
    <original>R</original>
    <variation>H</variation>
    <location>
        <position position="853"/>
    </location>
</feature>
<feature type="sequence variant" id="VAR_015825" description="Found in a CNS cancer cell line." evidence="7">
    <original>K</original>
    <variation>T</variation>
    <location>
        <position position="1059"/>
    </location>
</feature>
<feature type="sequence variant" id="VAR_057519" description="In dbSNP:rs3757650.">
    <original>R</original>
    <variation>K</variation>
    <location>
        <position position="1570"/>
    </location>
</feature>
<feature type="sequence variant" id="VAR_057520" description="In dbSNP:rs3757651.">
    <original>F</original>
    <variation>L</variation>
    <location>
        <position position="1580"/>
    </location>
</feature>
<feature type="sequence variant" id="VAR_015826" description="Found in prostate and ovarian cancer cell lines; abolishes ability to interact with CRK and to activate Rap1." evidence="7">
    <original>P</original>
    <variation>L</variation>
    <location>
        <position position="1718"/>
    </location>
</feature>
<feature type="sequence variant" id="VAR_015827" description="In dbSNP:rs150569245." evidence="7">
    <original>P</original>
    <variation>A</variation>
    <location>
        <position position="1733"/>
    </location>
</feature>
<feature type="sequence variant" id="VAR_015828" description="Found in colorectal cancer cell line." evidence="7">
    <original>S</original>
    <variation>P</variation>
    <location>
        <position position="1755"/>
    </location>
</feature>
<feature type="sequence variant" id="VAR_057521" description="In dbSNP:rs10281942.">
    <original>Q</original>
    <variation>K</variation>
    <location>
        <position position="1822"/>
    </location>
</feature>
<feature type="sequence variant" id="VAR_015829" description="Found in a prostate cancer cell line; dbSNP:rs369715294." evidence="7">
    <original>V</original>
    <variation>M</variation>
    <location>
        <position position="1884"/>
    </location>
</feature>
<feature type="sequence variant" id="VAR_015830" description="In dbSNP:rs12705795." evidence="7">
    <original>V</original>
    <variation>I</variation>
    <location>
        <position position="1914"/>
    </location>
</feature>
<feature type="sequence variant" id="VAR_015831" description="In dbSNP:rs199706346." evidence="7">
    <original>P</original>
    <variation>L</variation>
    <location>
        <position position="1917"/>
    </location>
</feature>
<feature type="sequence variant" id="VAR_015832" description="In dbSNP:rs34597439." evidence="7">
    <original>S</original>
    <variation>L</variation>
    <location>
        <position position="1926"/>
    </location>
</feature>
<feature type="sequence conflict" description="In Ref. 3; AAB83946." evidence="14" ref="3">
    <original>R</original>
    <variation>K</variation>
    <location>
        <position position="945"/>
    </location>
</feature>
<feature type="sequence conflict" description="In Ref. 1; AAO73565." evidence="14" ref="1">
    <original>D</original>
    <variation>G</variation>
    <location>
        <position position="1080"/>
    </location>
</feature>
<feature type="sequence conflict" description="In Ref. 2; BAC03696." evidence="14" ref="2">
    <original>K</original>
    <variation>E</variation>
    <location>
        <position position="1122"/>
    </location>
</feature>
<feature type="sequence conflict" description="In Ref. 3; BAC05221." evidence="14" ref="3">
    <original>YLQ</original>
    <variation>CIRTYKGWTQFGTAVITDVGRLGTQIITQIN</variation>
    <location>
        <begin position="1379"/>
        <end position="1381"/>
    </location>
</feature>
<gene>
    <name type="primary">DOCK4</name>
    <name type="synonym">KIAA0716</name>
</gene>
<keyword id="KW-0025">Alternative splicing</keyword>
<keyword id="KW-1003">Cell membrane</keyword>
<keyword id="KW-0966">Cell projection</keyword>
<keyword id="KW-0963">Cytoplasm</keyword>
<keyword id="KW-0344">Guanine-nucleotide releasing factor</keyword>
<keyword id="KW-0472">Membrane</keyword>
<keyword id="KW-0597">Phosphoprotein</keyword>
<keyword id="KW-1267">Proteomics identification</keyword>
<keyword id="KW-0656">Proto-oncogene</keyword>
<keyword id="KW-1185">Reference proteome</keyword>
<keyword id="KW-0728">SH3 domain</keyword>
<keyword id="KW-0729">SH3-binding</keyword>
<evidence type="ECO:0000250" key="1">
    <source>
        <dbReference type="UniProtKB" id="P59764"/>
    </source>
</evidence>
<evidence type="ECO:0000255" key="2"/>
<evidence type="ECO:0000255" key="3">
    <source>
        <dbReference type="PROSITE-ProRule" id="PRU00192"/>
    </source>
</evidence>
<evidence type="ECO:0000255" key="4">
    <source>
        <dbReference type="PROSITE-ProRule" id="PRU00983"/>
    </source>
</evidence>
<evidence type="ECO:0000255" key="5">
    <source>
        <dbReference type="PROSITE-ProRule" id="PRU00984"/>
    </source>
</evidence>
<evidence type="ECO:0000256" key="6">
    <source>
        <dbReference type="SAM" id="MobiDB-lite"/>
    </source>
</evidence>
<evidence type="ECO:0000269" key="7">
    <source>
    </source>
</evidence>
<evidence type="ECO:0000269" key="8">
    <source>
    </source>
</evidence>
<evidence type="ECO:0000269" key="9">
    <source>
    </source>
</evidence>
<evidence type="ECO:0000269" key="10">
    <source>
    </source>
</evidence>
<evidence type="ECO:0000303" key="11">
    <source>
    </source>
</evidence>
<evidence type="ECO:0000303" key="12">
    <source>
    </source>
</evidence>
<evidence type="ECO:0000303" key="13">
    <source>
    </source>
</evidence>
<evidence type="ECO:0000305" key="14"/>
<evidence type="ECO:0000305" key="15">
    <source>
    </source>
</evidence>
<evidence type="ECO:0007744" key="16">
    <source>
    </source>
</evidence>
<evidence type="ECO:0007744" key="17">
    <source>
    </source>
</evidence>
<accession>Q8N1I0</accession>
<accession>O14584</accession>
<accession>O94824</accession>
<accession>Q8NB45</accession>
<dbReference type="EMBL" id="AY233380">
    <property type="protein sequence ID" value="AAO73565.1"/>
    <property type="molecule type" value="mRNA"/>
</dbReference>
<dbReference type="EMBL" id="AK091557">
    <property type="protein sequence ID" value="BAC03696.1"/>
    <property type="status" value="ALT_INIT"/>
    <property type="molecule type" value="mRNA"/>
</dbReference>
<dbReference type="EMBL" id="AK098050">
    <property type="protein sequence ID" value="BAC05221.1"/>
    <property type="molecule type" value="mRNA"/>
</dbReference>
<dbReference type="EMBL" id="AC003077">
    <property type="protein sequence ID" value="AAB83946.1"/>
    <property type="molecule type" value="Genomic_DNA"/>
</dbReference>
<dbReference type="EMBL" id="AC003080">
    <property type="status" value="NOT_ANNOTATED_CDS"/>
    <property type="molecule type" value="Genomic_DNA"/>
</dbReference>
<dbReference type="EMBL" id="AC004111">
    <property type="status" value="NOT_ANNOTATED_CDS"/>
    <property type="molecule type" value="Genomic_DNA"/>
</dbReference>
<dbReference type="EMBL" id="AC005047">
    <property type="status" value="NOT_ANNOTATED_CDS"/>
    <property type="molecule type" value="Genomic_DNA"/>
</dbReference>
<dbReference type="EMBL" id="AB018259">
    <property type="protein sequence ID" value="BAA34436.3"/>
    <property type="molecule type" value="mRNA"/>
</dbReference>
<dbReference type="CCDS" id="CCDS47688.1">
    <molecule id="Q8N1I0-1"/>
</dbReference>
<dbReference type="CCDS" id="CCDS87541.1">
    <molecule id="Q8N1I0-3"/>
</dbReference>
<dbReference type="PIR" id="T01438">
    <property type="entry name" value="T01438"/>
</dbReference>
<dbReference type="RefSeq" id="NP_001350469.1">
    <molecule id="Q8N1I0-3"/>
    <property type="nucleotide sequence ID" value="NM_001363540.2"/>
</dbReference>
<dbReference type="RefSeq" id="NP_055520.3">
    <molecule id="Q8N1I0-1"/>
    <property type="nucleotide sequence ID" value="NM_014705.3"/>
</dbReference>
<dbReference type="RefSeq" id="XP_006716251.1">
    <property type="nucleotide sequence ID" value="XM_006716188.2"/>
</dbReference>
<dbReference type="RefSeq" id="XP_006716252.1">
    <molecule id="Q8N1I0-2"/>
    <property type="nucleotide sequence ID" value="XM_006716189.3"/>
</dbReference>
<dbReference type="RefSeq" id="XP_054215393.1">
    <molecule id="Q8N1I0-2"/>
    <property type="nucleotide sequence ID" value="XM_054359418.1"/>
</dbReference>
<dbReference type="SMR" id="Q8N1I0"/>
<dbReference type="BioGRID" id="115081">
    <property type="interactions" value="75"/>
</dbReference>
<dbReference type="FunCoup" id="Q8N1I0">
    <property type="interactions" value="2320"/>
</dbReference>
<dbReference type="IntAct" id="Q8N1I0">
    <property type="interactions" value="27"/>
</dbReference>
<dbReference type="MINT" id="Q8N1I0"/>
<dbReference type="STRING" id="9606.ENSP00000410746"/>
<dbReference type="GlyCosmos" id="Q8N1I0">
    <property type="glycosylation" value="2 sites, 1 glycan"/>
</dbReference>
<dbReference type="GlyGen" id="Q8N1I0">
    <property type="glycosylation" value="5 sites, 1 O-linked glycan (3 sites)"/>
</dbReference>
<dbReference type="iPTMnet" id="Q8N1I0"/>
<dbReference type="PhosphoSitePlus" id="Q8N1I0"/>
<dbReference type="BioMuta" id="DOCK4"/>
<dbReference type="DMDM" id="296439369"/>
<dbReference type="jPOST" id="Q8N1I0"/>
<dbReference type="MassIVE" id="Q8N1I0"/>
<dbReference type="PaxDb" id="9606-ENSP00000404179"/>
<dbReference type="PeptideAtlas" id="Q8N1I0"/>
<dbReference type="ProteomicsDB" id="71603">
    <molecule id="Q8N1I0-1"/>
</dbReference>
<dbReference type="ProteomicsDB" id="71604">
    <molecule id="Q8N1I0-2"/>
</dbReference>
<dbReference type="ProteomicsDB" id="71605">
    <molecule id="Q8N1I0-3"/>
</dbReference>
<dbReference type="ProteomicsDB" id="71606">
    <molecule id="Q8N1I0-4"/>
</dbReference>
<dbReference type="Pumba" id="Q8N1I0"/>
<dbReference type="Antibodypedia" id="31488">
    <property type="antibodies" value="149 antibodies from 23 providers"/>
</dbReference>
<dbReference type="DNASU" id="9732"/>
<dbReference type="Ensembl" id="ENST00000428084.6">
    <molecule id="Q8N1I0-3"/>
    <property type="protein sequence ID" value="ENSP00000410746.1"/>
    <property type="gene ID" value="ENSG00000128512.24"/>
</dbReference>
<dbReference type="Ensembl" id="ENST00000437633.6">
    <molecule id="Q8N1I0-1"/>
    <property type="protein sequence ID" value="ENSP00000404179.1"/>
    <property type="gene ID" value="ENSG00000128512.24"/>
</dbReference>
<dbReference type="GeneID" id="9732"/>
<dbReference type="KEGG" id="hsa:9732"/>
<dbReference type="MANE-Select" id="ENST00000428084.6">
    <molecule id="Q8N1I0-3"/>
    <property type="protein sequence ID" value="ENSP00000410746.1"/>
    <property type="RefSeq nucleotide sequence ID" value="NM_001363540.2"/>
    <property type="RefSeq protein sequence ID" value="NP_001350469.1"/>
</dbReference>
<dbReference type="UCSC" id="uc003vfx.4">
    <molecule id="Q8N1I0-1"/>
    <property type="organism name" value="human"/>
</dbReference>
<dbReference type="AGR" id="HGNC:19192"/>
<dbReference type="CTD" id="9732"/>
<dbReference type="DisGeNET" id="9732"/>
<dbReference type="GeneCards" id="DOCK4"/>
<dbReference type="HGNC" id="HGNC:19192">
    <property type="gene designation" value="DOCK4"/>
</dbReference>
<dbReference type="HPA" id="ENSG00000128512">
    <property type="expression patterns" value="Tissue enhanced (brain)"/>
</dbReference>
<dbReference type="MIM" id="607679">
    <property type="type" value="gene"/>
</dbReference>
<dbReference type="neXtProt" id="NX_Q8N1I0"/>
<dbReference type="OpenTargets" id="ENSG00000128512"/>
<dbReference type="PharmGKB" id="PA134939318"/>
<dbReference type="VEuPathDB" id="HostDB:ENSG00000128512"/>
<dbReference type="eggNOG" id="KOG1998">
    <property type="taxonomic scope" value="Eukaryota"/>
</dbReference>
<dbReference type="eggNOG" id="KOG3166">
    <property type="taxonomic scope" value="Eukaryota"/>
</dbReference>
<dbReference type="GeneTree" id="ENSGT00940000155659"/>
<dbReference type="InParanoid" id="Q8N1I0"/>
<dbReference type="OMA" id="FCADTYG"/>
<dbReference type="OrthoDB" id="18896at2759"/>
<dbReference type="PAN-GO" id="Q8N1I0">
    <property type="GO annotations" value="5 GO annotations based on evolutionary models"/>
</dbReference>
<dbReference type="PhylomeDB" id="Q8N1I0"/>
<dbReference type="TreeFam" id="TF300423"/>
<dbReference type="PathwayCommons" id="Q8N1I0"/>
<dbReference type="Reactome" id="R-HSA-9013149">
    <property type="pathway name" value="RAC1 GTPase cycle"/>
</dbReference>
<dbReference type="Reactome" id="R-HSA-9013404">
    <property type="pathway name" value="RAC2 GTPase cycle"/>
</dbReference>
<dbReference type="Reactome" id="R-HSA-9013408">
    <property type="pathway name" value="RHOG GTPase cycle"/>
</dbReference>
<dbReference type="Reactome" id="R-HSA-983231">
    <property type="pathway name" value="Factors involved in megakaryocyte development and platelet production"/>
</dbReference>
<dbReference type="SignaLink" id="Q8N1I0"/>
<dbReference type="SIGNOR" id="Q8N1I0"/>
<dbReference type="BioGRID-ORCS" id="9732">
    <property type="hits" value="13 hits in 1155 CRISPR screens"/>
</dbReference>
<dbReference type="ChiTaRS" id="DOCK4">
    <property type="organism name" value="human"/>
</dbReference>
<dbReference type="GeneWiki" id="Dock4"/>
<dbReference type="GenomeRNAi" id="9732"/>
<dbReference type="Pharos" id="Q8N1I0">
    <property type="development level" value="Tbio"/>
</dbReference>
<dbReference type="PRO" id="PR:Q8N1I0"/>
<dbReference type="Proteomes" id="UP000005640">
    <property type="component" value="Chromosome 7"/>
</dbReference>
<dbReference type="RNAct" id="Q8N1I0">
    <property type="molecule type" value="protein"/>
</dbReference>
<dbReference type="Bgee" id="ENSG00000128512">
    <property type="expression patterns" value="Expressed in endothelial cell and 199 other cell types or tissues"/>
</dbReference>
<dbReference type="ExpressionAtlas" id="Q8N1I0">
    <property type="expression patterns" value="baseline and differential"/>
</dbReference>
<dbReference type="GO" id="GO:0005737">
    <property type="term" value="C:cytoplasm"/>
    <property type="evidence" value="ECO:0000318"/>
    <property type="project" value="GO_Central"/>
</dbReference>
<dbReference type="GO" id="GO:0005829">
    <property type="term" value="C:cytosol"/>
    <property type="evidence" value="ECO:0000314"/>
    <property type="project" value="HPA"/>
</dbReference>
<dbReference type="GO" id="GO:0098978">
    <property type="term" value="C:glutamatergic synapse"/>
    <property type="evidence" value="ECO:0007669"/>
    <property type="project" value="Ensembl"/>
</dbReference>
<dbReference type="GO" id="GO:0005794">
    <property type="term" value="C:Golgi apparatus"/>
    <property type="evidence" value="ECO:0000314"/>
    <property type="project" value="HPA"/>
</dbReference>
<dbReference type="GO" id="GO:0016020">
    <property type="term" value="C:membrane"/>
    <property type="evidence" value="ECO:0000314"/>
    <property type="project" value="UniProtKB"/>
</dbReference>
<dbReference type="GO" id="GO:0005730">
    <property type="term" value="C:nucleolus"/>
    <property type="evidence" value="ECO:0000314"/>
    <property type="project" value="HPA"/>
</dbReference>
<dbReference type="GO" id="GO:0005886">
    <property type="term" value="C:plasma membrane"/>
    <property type="evidence" value="ECO:0000314"/>
    <property type="project" value="HPA"/>
</dbReference>
<dbReference type="GO" id="GO:0098794">
    <property type="term" value="C:postsynapse"/>
    <property type="evidence" value="ECO:0007669"/>
    <property type="project" value="Ensembl"/>
</dbReference>
<dbReference type="GO" id="GO:0032420">
    <property type="term" value="C:stereocilium"/>
    <property type="evidence" value="ECO:0000250"/>
    <property type="project" value="HGNC-UCL"/>
</dbReference>
<dbReference type="GO" id="GO:0032421">
    <property type="term" value="C:stereocilium bundle"/>
    <property type="evidence" value="ECO:0000250"/>
    <property type="project" value="HGNC-UCL"/>
</dbReference>
<dbReference type="GO" id="GO:0005096">
    <property type="term" value="F:GTPase activator activity"/>
    <property type="evidence" value="ECO:0007669"/>
    <property type="project" value="InterPro"/>
</dbReference>
<dbReference type="GO" id="GO:0005085">
    <property type="term" value="F:guanyl-nucleotide exchange factor activity"/>
    <property type="evidence" value="ECO:0000314"/>
    <property type="project" value="UniProtKB"/>
</dbReference>
<dbReference type="GO" id="GO:0030165">
    <property type="term" value="F:PDZ domain binding"/>
    <property type="evidence" value="ECO:0000353"/>
    <property type="project" value="HGNC-UCL"/>
</dbReference>
<dbReference type="GO" id="GO:0030971">
    <property type="term" value="F:receptor tyrosine kinase binding"/>
    <property type="evidence" value="ECO:0000353"/>
    <property type="project" value="UniProtKB"/>
</dbReference>
<dbReference type="GO" id="GO:0017124">
    <property type="term" value="F:SH3 domain binding"/>
    <property type="evidence" value="ECO:0007669"/>
    <property type="project" value="UniProtKB-KW"/>
</dbReference>
<dbReference type="GO" id="GO:0031267">
    <property type="term" value="F:small GTPase binding"/>
    <property type="evidence" value="ECO:0000314"/>
    <property type="project" value="HGNC-UCL"/>
</dbReference>
<dbReference type="GO" id="GO:0060326">
    <property type="term" value="P:cell chemotaxis"/>
    <property type="evidence" value="ECO:0000315"/>
    <property type="project" value="UniProtKB"/>
</dbReference>
<dbReference type="GO" id="GO:1904694">
    <property type="term" value="P:negative regulation of vascular associated smooth muscle contraction"/>
    <property type="evidence" value="ECO:0000315"/>
    <property type="project" value="BHF-UCL"/>
</dbReference>
<dbReference type="GO" id="GO:1904754">
    <property type="term" value="P:positive regulation of vascular associated smooth muscle cell migration"/>
    <property type="evidence" value="ECO:0000315"/>
    <property type="project" value="BHF-UCL"/>
</dbReference>
<dbReference type="GO" id="GO:0150052">
    <property type="term" value="P:regulation of postsynapse assembly"/>
    <property type="evidence" value="ECO:0007669"/>
    <property type="project" value="Ensembl"/>
</dbReference>
<dbReference type="GO" id="GO:0007264">
    <property type="term" value="P:small GTPase-mediated signal transduction"/>
    <property type="evidence" value="ECO:0007669"/>
    <property type="project" value="InterPro"/>
</dbReference>
<dbReference type="CDD" id="cd08695">
    <property type="entry name" value="C2_Dock-B"/>
    <property type="match status" value="1"/>
</dbReference>
<dbReference type="CDD" id="cd11705">
    <property type="entry name" value="DHR2_DOCK4"/>
    <property type="match status" value="1"/>
</dbReference>
<dbReference type="CDD" id="cd12049">
    <property type="entry name" value="SH3_DOCK4_B"/>
    <property type="match status" value="1"/>
</dbReference>
<dbReference type="FunFam" id="1.25.40.410:FF:000003">
    <property type="entry name" value="Dedicator of cytokinesis protein 4"/>
    <property type="match status" value="1"/>
</dbReference>
<dbReference type="FunFam" id="2.30.30.40:FF:000057">
    <property type="entry name" value="Dedicator of cytokinesis protein 4"/>
    <property type="match status" value="1"/>
</dbReference>
<dbReference type="FunFam" id="2.60.40.150:FF:000045">
    <property type="entry name" value="Dedicator of cytokinesis protein 4"/>
    <property type="match status" value="1"/>
</dbReference>
<dbReference type="FunFam" id="1.20.1270.350:FF:000001">
    <property type="entry name" value="dedicator of cytokinesis protein 4"/>
    <property type="match status" value="1"/>
</dbReference>
<dbReference type="FunFam" id="1.20.58.740:FF:000003">
    <property type="entry name" value="dedicator of cytokinesis protein 4"/>
    <property type="match status" value="1"/>
</dbReference>
<dbReference type="Gene3D" id="1.20.58.740">
    <property type="match status" value="1"/>
</dbReference>
<dbReference type="Gene3D" id="1.25.40.410">
    <property type="match status" value="1"/>
</dbReference>
<dbReference type="Gene3D" id="2.60.40.150">
    <property type="entry name" value="C2 domain"/>
    <property type="match status" value="1"/>
</dbReference>
<dbReference type="Gene3D" id="1.20.1270.350">
    <property type="entry name" value="Dedicator of cytokinesis N-terminal subdomain"/>
    <property type="match status" value="1"/>
</dbReference>
<dbReference type="Gene3D" id="2.30.30.40">
    <property type="entry name" value="SH3 Domains"/>
    <property type="match status" value="1"/>
</dbReference>
<dbReference type="InterPro" id="IPR037811">
    <property type="entry name" value="C2_Dock-B"/>
</dbReference>
<dbReference type="InterPro" id="IPR027007">
    <property type="entry name" value="C2_DOCK-type_domain"/>
</dbReference>
<dbReference type="InterPro" id="IPR035892">
    <property type="entry name" value="C2_domain_sf"/>
</dbReference>
<dbReference type="InterPro" id="IPR037014">
    <property type="entry name" value="DHR2_DOCK4"/>
</dbReference>
<dbReference type="InterPro" id="IPR026791">
    <property type="entry name" value="DOCK"/>
</dbReference>
<dbReference type="InterPro" id="IPR035769">
    <property type="entry name" value="DOCK4_SH3"/>
</dbReference>
<dbReference type="InterPro" id="IPR043161">
    <property type="entry name" value="DOCK_C_lobe_A"/>
</dbReference>
<dbReference type="InterPro" id="IPR043162">
    <property type="entry name" value="DOCK_C_lobe_C"/>
</dbReference>
<dbReference type="InterPro" id="IPR032376">
    <property type="entry name" value="DOCK_N"/>
</dbReference>
<dbReference type="InterPro" id="IPR042455">
    <property type="entry name" value="DOCK_N_sub1"/>
</dbReference>
<dbReference type="InterPro" id="IPR027357">
    <property type="entry name" value="DOCKER_dom"/>
</dbReference>
<dbReference type="InterPro" id="IPR046769">
    <property type="entry name" value="DOCKER_Lobe_A"/>
</dbReference>
<dbReference type="InterPro" id="IPR046770">
    <property type="entry name" value="DOCKER_Lobe_B"/>
</dbReference>
<dbReference type="InterPro" id="IPR046773">
    <property type="entry name" value="DOCKER_Lobe_C"/>
</dbReference>
<dbReference type="InterPro" id="IPR036028">
    <property type="entry name" value="SH3-like_dom_sf"/>
</dbReference>
<dbReference type="InterPro" id="IPR001452">
    <property type="entry name" value="SH3_domain"/>
</dbReference>
<dbReference type="InterPro" id="IPR056372">
    <property type="entry name" value="TPR_DOCK"/>
</dbReference>
<dbReference type="PANTHER" id="PTHR45653">
    <property type="entry name" value="DEDICATOR OF CYTOKINESIS"/>
    <property type="match status" value="1"/>
</dbReference>
<dbReference type="PANTHER" id="PTHR45653:SF7">
    <property type="entry name" value="DEDICATOR OF CYTOKINESIS PROTEIN 4"/>
    <property type="match status" value="1"/>
</dbReference>
<dbReference type="Pfam" id="PF06920">
    <property type="entry name" value="DHR-2_Lobe_A"/>
    <property type="match status" value="1"/>
</dbReference>
<dbReference type="Pfam" id="PF20422">
    <property type="entry name" value="DHR-2_Lobe_B"/>
    <property type="match status" value="1"/>
</dbReference>
<dbReference type="Pfam" id="PF20421">
    <property type="entry name" value="DHR-2_Lobe_C"/>
    <property type="match status" value="1"/>
</dbReference>
<dbReference type="Pfam" id="PF14429">
    <property type="entry name" value="DOCK-C2"/>
    <property type="match status" value="1"/>
</dbReference>
<dbReference type="Pfam" id="PF16172">
    <property type="entry name" value="DOCK_N"/>
    <property type="match status" value="1"/>
</dbReference>
<dbReference type="Pfam" id="PF07653">
    <property type="entry name" value="SH3_2"/>
    <property type="match status" value="1"/>
</dbReference>
<dbReference type="Pfam" id="PF23554">
    <property type="entry name" value="TPR_DOCK"/>
    <property type="match status" value="1"/>
</dbReference>
<dbReference type="SMART" id="SM00326">
    <property type="entry name" value="SH3"/>
    <property type="match status" value="1"/>
</dbReference>
<dbReference type="SUPFAM" id="SSF50044">
    <property type="entry name" value="SH3-domain"/>
    <property type="match status" value="1"/>
</dbReference>
<dbReference type="PROSITE" id="PS51650">
    <property type="entry name" value="C2_DOCK"/>
    <property type="match status" value="1"/>
</dbReference>
<dbReference type="PROSITE" id="PS51651">
    <property type="entry name" value="DOCKER"/>
    <property type="match status" value="1"/>
</dbReference>
<dbReference type="PROSITE" id="PS50002">
    <property type="entry name" value="SH3"/>
    <property type="match status" value="1"/>
</dbReference>
<organism>
    <name type="scientific">Homo sapiens</name>
    <name type="common">Human</name>
    <dbReference type="NCBI Taxonomy" id="9606"/>
    <lineage>
        <taxon>Eukaryota</taxon>
        <taxon>Metazoa</taxon>
        <taxon>Chordata</taxon>
        <taxon>Craniata</taxon>
        <taxon>Vertebrata</taxon>
        <taxon>Euteleostomi</taxon>
        <taxon>Mammalia</taxon>
        <taxon>Eutheria</taxon>
        <taxon>Euarchontoglires</taxon>
        <taxon>Primates</taxon>
        <taxon>Haplorrhini</taxon>
        <taxon>Catarrhini</taxon>
        <taxon>Hominidae</taxon>
        <taxon>Homo</taxon>
    </lineage>
</organism>
<comment type="function">
    <text evidence="7 8 10">Functions as a guanine nucleotide exchange factor (GEF) that promotes the exchange of GDP to GTP, converting inactive GDP-bound small GTPases into their active GTP-bound form (PubMed:12628187, PubMed:16464467). Involved in regulation of adherens junction between cells (PubMed:12628187). Plays a role in cell migration (PubMed:20679435).</text>
</comment>
<comment type="function">
    <molecule>Isoform 2</molecule>
    <text evidence="8">Has a higher guanine nucleotide exchange factor activity compared to other isoforms.</text>
</comment>
<comment type="subunit">
    <text evidence="7 8 9 10">Interacts with nucleotide-free Rap1; functions as a guanine nucleotide exchange factor (GEF) for Rap1 (PubMed:12628187). Interacts (via DOCKER domain) with RAC1; functions as a guanine nucleotide exchange factor (GEF) for RAC1 (PubMed:16464467). Interacts with the SH3 domain of CRK (PubMed:12628187). Interacts with FASLG (PubMed:19807924). Interacts with ELMO2 and EPHA2; mediates activation of RAC1 by EPHA2 (PubMed:20679435). Interacts with USH1C (via PDZ 1 domain) (PubMed:16464467).</text>
</comment>
<comment type="interaction">
    <interactant intactId="EBI-1059186">
        <id>Q8N1I0</id>
    </interactant>
    <interactant intactId="EBI-3908153">
        <id>P98153</id>
        <label>DGCR2</label>
    </interactant>
    <organismsDiffer>false</organismsDiffer>
    <experiments>3</experiments>
</comment>
<comment type="interaction">
    <interactant intactId="EBI-1059186">
        <id>Q8N1I0</id>
    </interactant>
    <interactant intactId="EBI-401755">
        <id>P62993</id>
        <label>GRB2</label>
    </interactant>
    <organismsDiffer>false</organismsDiffer>
    <experiments>5</experiments>
</comment>
<comment type="subcellular location">
    <subcellularLocation>
        <location evidence="7">Cell membrane</location>
    </subcellularLocation>
    <subcellularLocation>
        <location evidence="10">Cell projection</location>
    </subcellularLocation>
    <subcellularLocation>
        <location evidence="15">Cytoplasm</location>
        <location evidence="15">Cytosol</location>
    </subcellularLocation>
    <text evidence="10">Colocalizes with EPHA2, RHOG and CTTN/cortactin at the tip of protrusions in migrating cells.</text>
</comment>
<comment type="alternative products">
    <event type="alternative splicing"/>
    <isoform>
        <id>Q8N1I0-1</id>
        <name>1</name>
        <sequence type="displayed"/>
    </isoform>
    <isoform>
        <id>Q8N1I0-2</id>
        <name>2</name>
        <name evidence="12">DOCK4-Ex49</name>
        <sequence type="described" ref="VSP_007703 VSP_007706"/>
    </isoform>
    <isoform>
        <id>Q8N1I0-3</id>
        <name>3</name>
        <sequence type="described" ref="VSP_007703"/>
    </isoform>
    <isoform>
        <id>Q8N1I0-4</id>
        <name>4</name>
        <sequence type="described" ref="VSP_007701 VSP_007705"/>
    </isoform>
</comment>
<comment type="tissue specificity">
    <text evidence="7">Widely expressed at low level. Highly expressed in skeletal muscle, prostate and ovary.</text>
</comment>
<comment type="tissue specificity">
    <molecule>Isoform 2</molecule>
    <text evidence="8">May be specifically expressed in the brain and eye.</text>
</comment>
<comment type="domain">
    <text evidence="8">The DOCKER domain mediates interaction with small GTPases like RAC1 and is required for their activation.</text>
</comment>
<comment type="similarity">
    <text evidence="4">Belongs to the DOCK family.</text>
</comment>
<comment type="sequence caution" evidence="14">
    <conflict type="erroneous initiation">
        <sequence resource="EMBL-CDS" id="BAC03696"/>
    </conflict>
    <text>Truncated N-terminus.</text>
</comment>
<proteinExistence type="evidence at protein level"/>
<sequence length="1966" mass="225206">MWIPTEHEKYGVVIASFRGTVPYGLSLEIGDTVQILEKCDGWYRGFALKNPNIKGIFPSSYVHLKNACVKNKGQFEMVIPTEDSVITEMTSTLRDWGTMWKQLYVRNEGDLFHRLWHIMNEILDLRRQVLVGHLTHDRMKDVKRHITARLDWGNEQLGLDLVPRKEYAMVDPEDISITELYRLMEHRHRKKDTPVQASSHHLFVQMKSLMCSNLGEELEVIFSLFDSKENRPISERFFLRLNRNGLPKAPDKPERHCSLFVDLGSSELRKDIYITVHIIRIGRMGAGEKKNACSVQYRRPFGCAVLSIADLLTGETKDDLILKVYMCNTESEWYQIHENIIKKLNARYNLTGSNAGLAVSLQLLHGDIEQIRREYSSVFSHGVSITRKLGFSNIIMPGEMRNDLYITIERGEFEKGGKSVARNVEVTMFIVDSSGQTLKDFISFGSGEPPASEYHSFVLYHNNSPRWSELLKLPIPVDKFRGAHIRFEFRHCSTKEKGEKKLFGFSFVPLMQEDGRTLPDGTHELIVHKCEENTNLQDTTRYLKLPFSKGIFLGNNNQAMKATKESFCITSFLCSTKLTQNGDMLDLLKWRTHPDKITGCLSKLKEIDGSEIVKFLQDTLDTLFGILDENSQKYGSKVFDSLVHIINLLQDSKFHHFKPVMDTYIESHFAGALAYRDLIKVLKWYVDRITEAERQEHIQEVLKAQEYIFKYIVQSRRLFSLATGGQNEEEFRCCIQELLMSVRFFLSQESKGSGALSQSQAVFLSSFPAVYSELLKLFDVREVANLVQDTLGSLPTILHVDDSLQAIKLQCIGKTVESQLYTNPDSRYILLPVVLHHLHIHLQEQKDLIMCARILSNVFCLIKKNSSEKSVLEEIDVIVASLLDILLRTILEITSRPQPSSSAMRFQFQDVTGEFVACLLSLLRQMTDRHYQQLLDSFNTKEELRDFLLQIFTVFRILIRPEMFPKDWTVMRLVANNVIITTVLYLSDALRKNFLNENFDYKIWDSYFYLAVIFINQLCLQLEMFTPSKKKKVLEKYGDMRVTMGCEIFSMWQNLGEHKLHFIPALIGPFLEVTLIPQPDLRNVMIPIFHDMMDWEQRRSGNFKQVEAKLIDKLDSLMSEGKGDETYRELFNSILLKKIERETWRESGVSLIATVTRLMERLLDYRDCMKMGEVDGKKIGCTVSLLNFYKTELNKEEMYIRYIHKLYDLHLKAQNFTEAAYTLLLYDELLEWSDRPLREFLTYPMQTEWQRKEHLHLTIIQNFDRGKCWENGIILCRKIAEQYESYYDYRNLSKMRMMEASLYDKIMDQQRLEPEFFRVGFYGKKFPFFLRNKEFVCRGHDYERLEAFQQRMLNEFPHAIAMQHANQPDETIFQAEAQYLQIYAVTPIPESQEVLQREGVPDNIKSFYKVNHIWKFRYDRPFHKGTKDKENEFKSLWVERTSLYLVQSLPGISRWFEVEKREVVEMSPLENAIEVLENKNQQLKTLISQCQTRQMQNINPLTMCLNGVIDAAVNGGVSRYQEAFFVKEYILSHPEDGEKIARLRELMLEQAQILEFGLAVHEKFVPQDMRPLHKKLVDQFFVMKSSLGIQEFSACMQASPVHFPNGSPRVCRNSAPASVSPDGTRVIPRRSPLSYPAVNRYSSSSLSSQASAEVSNITGQSESSDEVFNMQPSPSTSSLSSTHSASPNVTSSAPSSARASPLLSDKHKHSRENSCLSPRERPCSAIYPTPVEPSQRMLFNHIGDGALPRSDPNLSAPEKAVNPTPSSWSLDSGKEAKNMSDSGKLISPPVPPRPTQTASPARHTTSVSPSPAGRSPLKGSVQSFTPSPVEYHSPGLISNSPVLSGSYSSGISSLSRCSTSETSGFENQVNEQSAPLPVPVPVPVPSYGGEEPVRKESKTPPPYSVYERTLRRPVPLPHSLSIPVTSEPPALPPKPLAARSSHLENGARRTDPGPRPRPLPRKVSQL</sequence>